<protein>
    <recommendedName>
        <fullName>Uncharacterized NOC2 family protein C1142.04</fullName>
    </recommendedName>
</protein>
<feature type="chain" id="PRO_0000326122" description="Uncharacterized NOC2 family protein C1142.04">
    <location>
        <begin position="1"/>
        <end position="707"/>
    </location>
</feature>
<feature type="region of interest" description="Disordered" evidence="2">
    <location>
        <begin position="15"/>
        <end position="122"/>
    </location>
</feature>
<feature type="region of interest" description="Disordered" evidence="2">
    <location>
        <begin position="667"/>
        <end position="707"/>
    </location>
</feature>
<feature type="coiled-coil region" evidence="1">
    <location>
        <begin position="659"/>
        <end position="700"/>
    </location>
</feature>
<feature type="compositionally biased region" description="Basic and acidic residues" evidence="2">
    <location>
        <begin position="18"/>
        <end position="32"/>
    </location>
</feature>
<feature type="compositionally biased region" description="Basic and acidic residues" evidence="2">
    <location>
        <begin position="40"/>
        <end position="52"/>
    </location>
</feature>
<feature type="compositionally biased region" description="Acidic residues" evidence="2">
    <location>
        <begin position="692"/>
        <end position="707"/>
    </location>
</feature>
<feature type="modified residue" description="Phosphoserine" evidence="5">
    <location>
        <position position="112"/>
    </location>
</feature>
<organism>
    <name type="scientific">Schizosaccharomyces pombe (strain 972 / ATCC 24843)</name>
    <name type="common">Fission yeast</name>
    <dbReference type="NCBI Taxonomy" id="284812"/>
    <lineage>
        <taxon>Eukaryota</taxon>
        <taxon>Fungi</taxon>
        <taxon>Dikarya</taxon>
        <taxon>Ascomycota</taxon>
        <taxon>Taphrinomycotina</taxon>
        <taxon>Schizosaccharomycetes</taxon>
        <taxon>Schizosaccharomycetales</taxon>
        <taxon>Schizosaccharomycetaceae</taxon>
        <taxon>Schizosaccharomyces</taxon>
    </lineage>
</organism>
<evidence type="ECO:0000255" key="1"/>
<evidence type="ECO:0000256" key="2">
    <source>
        <dbReference type="SAM" id="MobiDB-lite"/>
    </source>
</evidence>
<evidence type="ECO:0000269" key="3">
    <source>
    </source>
</evidence>
<evidence type="ECO:0000269" key="4">
    <source>
    </source>
</evidence>
<evidence type="ECO:0000269" key="5">
    <source>
    </source>
</evidence>
<evidence type="ECO:0000305" key="6"/>
<evidence type="ECO:0000312" key="7">
    <source>
        <dbReference type="EMBL" id="BAA87241.1"/>
    </source>
</evidence>
<evidence type="ECO:0000312" key="8">
    <source>
        <dbReference type="EMBL" id="CAB77011.1"/>
    </source>
</evidence>
<dbReference type="EMBL" id="CU329670">
    <property type="protein sequence ID" value="CAB77011.1"/>
    <property type="molecule type" value="Genomic_DNA"/>
</dbReference>
<dbReference type="EMBL" id="AB027937">
    <property type="protein sequence ID" value="BAA87241.1"/>
    <property type="molecule type" value="Genomic_DNA"/>
</dbReference>
<dbReference type="PDB" id="8ESQ">
    <property type="method" value="EM"/>
    <property type="resolution" value="2.80 A"/>
    <property type="chains" value="7=1-707"/>
</dbReference>
<dbReference type="PDB" id="8ESR">
    <property type="method" value="EM"/>
    <property type="resolution" value="3.20 A"/>
    <property type="chains" value="7=1-707"/>
</dbReference>
<dbReference type="PDBsum" id="8ESQ"/>
<dbReference type="PDBsum" id="8ESR"/>
<dbReference type="SMR" id="Q9P7G0"/>
<dbReference type="BioGRID" id="279119">
    <property type="interactions" value="25"/>
</dbReference>
<dbReference type="FunCoup" id="Q9P7G0">
    <property type="interactions" value="525"/>
</dbReference>
<dbReference type="STRING" id="284812.Q9P7G0"/>
<dbReference type="iPTMnet" id="Q9P7G0"/>
<dbReference type="PaxDb" id="4896-SPAC1142.04.1"/>
<dbReference type="EnsemblFungi" id="SPAC1142.04.1">
    <property type="protein sequence ID" value="SPAC1142.04.1:pep"/>
    <property type="gene ID" value="SPAC1142.04"/>
</dbReference>
<dbReference type="KEGG" id="spo:2542666"/>
<dbReference type="PomBase" id="SPAC1142.04"/>
<dbReference type="VEuPathDB" id="FungiDB:SPAC1142.04"/>
<dbReference type="eggNOG" id="KOG2256">
    <property type="taxonomic scope" value="Eukaryota"/>
</dbReference>
<dbReference type="HOGENOM" id="CLU_011272_0_0_1"/>
<dbReference type="InParanoid" id="Q9P7G0"/>
<dbReference type="OMA" id="GCLRYYL"/>
<dbReference type="PhylomeDB" id="Q9P7G0"/>
<dbReference type="PRO" id="PR:Q9P7G0"/>
<dbReference type="Proteomes" id="UP000002485">
    <property type="component" value="Chromosome I"/>
</dbReference>
<dbReference type="GO" id="GO:0030690">
    <property type="term" value="C:Noc1p-Noc2p complex"/>
    <property type="evidence" value="ECO:0000318"/>
    <property type="project" value="GO_Central"/>
</dbReference>
<dbReference type="GO" id="GO:0030691">
    <property type="term" value="C:Noc2p-Noc3p complex"/>
    <property type="evidence" value="ECO:0000318"/>
    <property type="project" value="GO_Central"/>
</dbReference>
<dbReference type="GO" id="GO:0005730">
    <property type="term" value="C:nucleolus"/>
    <property type="evidence" value="ECO:0007005"/>
    <property type="project" value="PomBase"/>
</dbReference>
<dbReference type="GO" id="GO:0005654">
    <property type="term" value="C:nucleoplasm"/>
    <property type="evidence" value="ECO:0000318"/>
    <property type="project" value="GO_Central"/>
</dbReference>
<dbReference type="GO" id="GO:0042273">
    <property type="term" value="P:ribosomal large subunit biogenesis"/>
    <property type="evidence" value="ECO:0000318"/>
    <property type="project" value="GO_Central"/>
</dbReference>
<dbReference type="InterPro" id="IPR005343">
    <property type="entry name" value="Noc2"/>
</dbReference>
<dbReference type="PANTHER" id="PTHR12687">
    <property type="entry name" value="NUCLEOLAR COMPLEX 2 AND RAD4-RELATED"/>
    <property type="match status" value="1"/>
</dbReference>
<dbReference type="PANTHER" id="PTHR12687:SF4">
    <property type="entry name" value="NUCLEOLAR COMPLEX PROTEIN 2 HOMOLOG"/>
    <property type="match status" value="1"/>
</dbReference>
<dbReference type="Pfam" id="PF03715">
    <property type="entry name" value="Noc2"/>
    <property type="match status" value="1"/>
</dbReference>
<sequence>MVKLSSIIKARKANALAKKNDKIKKKDTDKGIRQKHSKKEGKDETLKRDVEKFIQNVNSEDTPSEDDSMSMDAFLEGGFEELDSANSNDAGSSRKRKNLPNENTQDSTSESSEEEEDGLESYQKQLEGLKEKDPEFYKFLEQNDQDLLEFNAAETDAMAKEIDENERLKSSSGKIVLTSDTIQQWQKLLETNHSLTTLQKVVQAFKAAAFLNEEEAEDLKYTISDSKVFNDLLLLAIQYVPKVLNYHVPIQEDAKGKKFINTDSKVLPKLRPVLKSYGFSILRLLEGMTDAKNISLLLREAQNVLPYMITYRKFLKQFTQATVEVWSSTRDDSVRFSAVVLLRTLCLTADITLLEFVLKEVYLGMARQSAYTTVHTLDKINFLKNSAVNLFLLDAESCYLIGFRYIRQLAITLRNTIHQPSKDSRKPVQSWSYVHSLDFWARLLSQAAWLSREKGVASELQSLVYPLVQIALGVIMSSPSSQLFPMRFHIIRSLIYLSRHTGVFIPLAPSLFEVLDSSYVSRKAKASTLKPLDFDVELRASSSYLRTKVYQDGLIDQLLELLSEYYVLYATDISFPELVIPAIVRSKRFAKRSKNAKLNRGLLTLVNRLEQQSKFMTEKRNQQKFAPIDSDSVEQFAQTIDWQQTPLGIYVVTQRQTREEQRKLIRESVQQDQEHKEQMRQKKKQALKSDDIELDDLSEEEAEDIDE</sequence>
<comment type="subcellular location">
    <subcellularLocation>
        <location evidence="3 4">Nucleus</location>
        <location evidence="3 4">Nucleolus</location>
    </subcellularLocation>
</comment>
<comment type="similarity">
    <text evidence="1">Belongs to the NOC2 family.</text>
</comment>
<name>YKY4_SCHPO</name>
<proteinExistence type="evidence at protein level"/>
<accession>Q9P7G0</accession>
<accession>Q9UTY0</accession>
<gene>
    <name type="ORF">SPAC1142.04</name>
</gene>
<reference evidence="8" key="1">
    <citation type="journal article" date="2002" name="Nature">
        <title>The genome sequence of Schizosaccharomyces pombe.</title>
        <authorList>
            <person name="Wood V."/>
            <person name="Gwilliam R."/>
            <person name="Rajandream M.A."/>
            <person name="Lyne M.H."/>
            <person name="Lyne R."/>
            <person name="Stewart A."/>
            <person name="Sgouros J.G."/>
            <person name="Peat N."/>
            <person name="Hayles J."/>
            <person name="Baker S.G."/>
            <person name="Basham D."/>
            <person name="Bowman S."/>
            <person name="Brooks K."/>
            <person name="Brown D."/>
            <person name="Brown S."/>
            <person name="Chillingworth T."/>
            <person name="Churcher C.M."/>
            <person name="Collins M."/>
            <person name="Connor R."/>
            <person name="Cronin A."/>
            <person name="Davis P."/>
            <person name="Feltwell T."/>
            <person name="Fraser A."/>
            <person name="Gentles S."/>
            <person name="Goble A."/>
            <person name="Hamlin N."/>
            <person name="Harris D.E."/>
            <person name="Hidalgo J."/>
            <person name="Hodgson G."/>
            <person name="Holroyd S."/>
            <person name="Hornsby T."/>
            <person name="Howarth S."/>
            <person name="Huckle E.J."/>
            <person name="Hunt S."/>
            <person name="Jagels K."/>
            <person name="James K.D."/>
            <person name="Jones L."/>
            <person name="Jones M."/>
            <person name="Leather S."/>
            <person name="McDonald S."/>
            <person name="McLean J."/>
            <person name="Mooney P."/>
            <person name="Moule S."/>
            <person name="Mungall K.L."/>
            <person name="Murphy L.D."/>
            <person name="Niblett D."/>
            <person name="Odell C."/>
            <person name="Oliver K."/>
            <person name="O'Neil S."/>
            <person name="Pearson D."/>
            <person name="Quail M.A."/>
            <person name="Rabbinowitsch E."/>
            <person name="Rutherford K.M."/>
            <person name="Rutter S."/>
            <person name="Saunders D."/>
            <person name="Seeger K."/>
            <person name="Sharp S."/>
            <person name="Skelton J."/>
            <person name="Simmonds M.N."/>
            <person name="Squares R."/>
            <person name="Squares S."/>
            <person name="Stevens K."/>
            <person name="Taylor K."/>
            <person name="Taylor R.G."/>
            <person name="Tivey A."/>
            <person name="Walsh S.V."/>
            <person name="Warren T."/>
            <person name="Whitehead S."/>
            <person name="Woodward J.R."/>
            <person name="Volckaert G."/>
            <person name="Aert R."/>
            <person name="Robben J."/>
            <person name="Grymonprez B."/>
            <person name="Weltjens I."/>
            <person name="Vanstreels E."/>
            <person name="Rieger M."/>
            <person name="Schaefer M."/>
            <person name="Mueller-Auer S."/>
            <person name="Gabel C."/>
            <person name="Fuchs M."/>
            <person name="Duesterhoeft A."/>
            <person name="Fritzc C."/>
            <person name="Holzer E."/>
            <person name="Moestl D."/>
            <person name="Hilbert H."/>
            <person name="Borzym K."/>
            <person name="Langer I."/>
            <person name="Beck A."/>
            <person name="Lehrach H."/>
            <person name="Reinhardt R."/>
            <person name="Pohl T.M."/>
            <person name="Eger P."/>
            <person name="Zimmermann W."/>
            <person name="Wedler H."/>
            <person name="Wambutt R."/>
            <person name="Purnelle B."/>
            <person name="Goffeau A."/>
            <person name="Cadieu E."/>
            <person name="Dreano S."/>
            <person name="Gloux S."/>
            <person name="Lelaure V."/>
            <person name="Mottier S."/>
            <person name="Galibert F."/>
            <person name="Aves S.J."/>
            <person name="Xiang Z."/>
            <person name="Hunt C."/>
            <person name="Moore K."/>
            <person name="Hurst S.M."/>
            <person name="Lucas M."/>
            <person name="Rochet M."/>
            <person name="Gaillardin C."/>
            <person name="Tallada V.A."/>
            <person name="Garzon A."/>
            <person name="Thode G."/>
            <person name="Daga R.R."/>
            <person name="Cruzado L."/>
            <person name="Jimenez J."/>
            <person name="Sanchez M."/>
            <person name="del Rey F."/>
            <person name="Benito J."/>
            <person name="Dominguez A."/>
            <person name="Revuelta J.L."/>
            <person name="Moreno S."/>
            <person name="Armstrong J."/>
            <person name="Forsburg S.L."/>
            <person name="Cerutti L."/>
            <person name="Lowe T."/>
            <person name="McCombie W.R."/>
            <person name="Paulsen I."/>
            <person name="Potashkin J."/>
            <person name="Shpakovski G.V."/>
            <person name="Ussery D."/>
            <person name="Barrell B.G."/>
            <person name="Nurse P."/>
        </authorList>
    </citation>
    <scope>NUCLEOTIDE SEQUENCE [LARGE SCALE GENOMIC DNA]</scope>
    <source>
        <strain>972 / ATCC 24843</strain>
    </source>
</reference>
<reference evidence="6 7" key="2">
    <citation type="journal article" date="2000" name="Genes Cells">
        <title>Large-scale screening of intracellular protein localization in living fission yeast cells by the use of a GFP-fusion genomic DNA library.</title>
        <authorList>
            <person name="Ding D.-Q."/>
            <person name="Tomita Y."/>
            <person name="Yamamoto A."/>
            <person name="Chikashige Y."/>
            <person name="Haraguchi T."/>
            <person name="Hiraoka Y."/>
        </authorList>
    </citation>
    <scope>NUCLEOTIDE SEQUENCE [LARGE SCALE GENOMIC DNA] OF 1-133</scope>
    <scope>SUBCELLULAR LOCATION</scope>
    <source>
        <strain evidence="7">ATCC 38364 / 968</strain>
    </source>
</reference>
<reference evidence="6" key="3">
    <citation type="journal article" date="2006" name="Nat. Biotechnol.">
        <title>ORFeome cloning and global analysis of protein localization in the fission yeast Schizosaccharomyces pombe.</title>
        <authorList>
            <person name="Matsuyama A."/>
            <person name="Arai R."/>
            <person name="Yashiroda Y."/>
            <person name="Shirai A."/>
            <person name="Kamata A."/>
            <person name="Sekido S."/>
            <person name="Kobayashi Y."/>
            <person name="Hashimoto A."/>
            <person name="Hamamoto M."/>
            <person name="Hiraoka Y."/>
            <person name="Horinouchi S."/>
            <person name="Yoshida M."/>
        </authorList>
    </citation>
    <scope>SUBCELLULAR LOCATION [LARGE SCALE ANALYSIS]</scope>
</reference>
<reference key="4">
    <citation type="journal article" date="2008" name="J. Proteome Res.">
        <title>Phosphoproteome analysis of fission yeast.</title>
        <authorList>
            <person name="Wilson-Grady J.T."/>
            <person name="Villen J."/>
            <person name="Gygi S.P."/>
        </authorList>
    </citation>
    <scope>PHOSPHORYLATION [LARGE SCALE ANALYSIS] AT SER-112</scope>
    <scope>IDENTIFICATION BY MASS SPECTROMETRY</scope>
</reference>
<keyword id="KW-0002">3D-structure</keyword>
<keyword id="KW-0175">Coiled coil</keyword>
<keyword id="KW-0539">Nucleus</keyword>
<keyword id="KW-0597">Phosphoprotein</keyword>
<keyword id="KW-1185">Reference proteome</keyword>